<comment type="function">
    <text evidence="1">The beta subunit is responsible for the synthesis of L-tryptophan from indole and L-serine.</text>
</comment>
<comment type="catalytic activity">
    <reaction evidence="1">
        <text>(1S,2R)-1-C-(indol-3-yl)glycerol 3-phosphate + L-serine = D-glyceraldehyde 3-phosphate + L-tryptophan + H2O</text>
        <dbReference type="Rhea" id="RHEA:10532"/>
        <dbReference type="ChEBI" id="CHEBI:15377"/>
        <dbReference type="ChEBI" id="CHEBI:33384"/>
        <dbReference type="ChEBI" id="CHEBI:57912"/>
        <dbReference type="ChEBI" id="CHEBI:58866"/>
        <dbReference type="ChEBI" id="CHEBI:59776"/>
        <dbReference type="EC" id="4.2.1.20"/>
    </reaction>
</comment>
<comment type="cofactor">
    <cofactor evidence="1">
        <name>pyridoxal 5'-phosphate</name>
        <dbReference type="ChEBI" id="CHEBI:597326"/>
    </cofactor>
</comment>
<comment type="pathway">
    <text evidence="1">Amino-acid biosynthesis; L-tryptophan biosynthesis; L-tryptophan from chorismate: step 5/5.</text>
</comment>
<comment type="subunit">
    <text evidence="1">Tetramer of two alpha and two beta chains.</text>
</comment>
<comment type="similarity">
    <text evidence="1">Belongs to the TrpB family.</text>
</comment>
<reference key="1">
    <citation type="submission" date="2006-03" db="EMBL/GenBank/DDBJ databases">
        <title>Complete genome sequence of Francisella tularensis LVS (Live Vaccine Strain).</title>
        <authorList>
            <person name="Chain P."/>
            <person name="Larimer F."/>
            <person name="Land M."/>
            <person name="Stilwagen S."/>
            <person name="Larsson P."/>
            <person name="Bearden S."/>
            <person name="Chu M."/>
            <person name="Oyston P."/>
            <person name="Forsman M."/>
            <person name="Andersson S."/>
            <person name="Lindler L."/>
            <person name="Titball R."/>
            <person name="Garcia E."/>
        </authorList>
    </citation>
    <scope>NUCLEOTIDE SEQUENCE [LARGE SCALE GENOMIC DNA]</scope>
    <source>
        <strain>LVS</strain>
    </source>
</reference>
<name>TRPB_FRATH</name>
<keyword id="KW-0028">Amino-acid biosynthesis</keyword>
<keyword id="KW-0057">Aromatic amino acid biosynthesis</keyword>
<keyword id="KW-0456">Lyase</keyword>
<keyword id="KW-0663">Pyridoxal phosphate</keyword>
<keyword id="KW-1185">Reference proteome</keyword>
<keyword id="KW-0822">Tryptophan biosynthesis</keyword>
<feature type="chain" id="PRO_1000018342" description="Tryptophan synthase beta chain">
    <location>
        <begin position="1"/>
        <end position="396"/>
    </location>
</feature>
<feature type="modified residue" description="N6-(pyridoxal phosphate)lysine" evidence="1">
    <location>
        <position position="86"/>
    </location>
</feature>
<sequence length="396" mass="43107">MSKLNAYFGEYGGQFVPQILVPALDQLEQEFIKAQADESFKQEFKELLQEYAGRPTALTKTRNIVKNTRTKLYLKREDLLHGGAHKTNQVLGQALLVKRMGKKEIIAETGAGQHGVATALACALLDLKCRVYMGAKDVERQSPNVFRMKLMGAEVIPVHSGSATLKDACNEALRDWSANYSKAHYLLGTAAGPHPFPTIVREFQRMIGEETKQQMLAKEGRLPDAVIACVGGGSNAIGMFADFIDEKNVKLIGVEPAGKGIETGEHGAPLKHGKTGIFFGMKAPLMQNSDGQIEESYSISAGLDFPSVGPQHAHLLAIGRAKYASATDDEALDAFKLLCKKEGIIPALESSHALAHALKLAYEDPNKEQLLVVNLSGRGDKDIFTVHDILKEKGEI</sequence>
<evidence type="ECO:0000255" key="1">
    <source>
        <dbReference type="HAMAP-Rule" id="MF_00133"/>
    </source>
</evidence>
<accession>Q2A5V3</accession>
<organism>
    <name type="scientific">Francisella tularensis subsp. holarctica (strain LVS)</name>
    <dbReference type="NCBI Taxonomy" id="376619"/>
    <lineage>
        <taxon>Bacteria</taxon>
        <taxon>Pseudomonadati</taxon>
        <taxon>Pseudomonadota</taxon>
        <taxon>Gammaproteobacteria</taxon>
        <taxon>Thiotrichales</taxon>
        <taxon>Francisellaceae</taxon>
        <taxon>Francisella</taxon>
    </lineage>
</organism>
<dbReference type="EC" id="4.2.1.20" evidence="1"/>
<dbReference type="EMBL" id="AM233362">
    <property type="protein sequence ID" value="CAJ78540.1"/>
    <property type="molecule type" value="Genomic_DNA"/>
</dbReference>
<dbReference type="RefSeq" id="WP_003014081.1">
    <property type="nucleotide sequence ID" value="NZ_CP009694.1"/>
</dbReference>
<dbReference type="SMR" id="Q2A5V3"/>
<dbReference type="KEGG" id="ftl:FTL_0099"/>
<dbReference type="UniPathway" id="UPA00035">
    <property type="reaction ID" value="UER00044"/>
</dbReference>
<dbReference type="Proteomes" id="UP000001944">
    <property type="component" value="Chromosome"/>
</dbReference>
<dbReference type="GO" id="GO:0005737">
    <property type="term" value="C:cytoplasm"/>
    <property type="evidence" value="ECO:0007669"/>
    <property type="project" value="TreeGrafter"/>
</dbReference>
<dbReference type="GO" id="GO:0004834">
    <property type="term" value="F:tryptophan synthase activity"/>
    <property type="evidence" value="ECO:0007669"/>
    <property type="project" value="UniProtKB-UniRule"/>
</dbReference>
<dbReference type="CDD" id="cd06446">
    <property type="entry name" value="Trp-synth_B"/>
    <property type="match status" value="1"/>
</dbReference>
<dbReference type="FunFam" id="3.40.50.1100:FF:000001">
    <property type="entry name" value="Tryptophan synthase beta chain"/>
    <property type="match status" value="1"/>
</dbReference>
<dbReference type="FunFam" id="3.40.50.1100:FF:000004">
    <property type="entry name" value="Tryptophan synthase beta chain"/>
    <property type="match status" value="1"/>
</dbReference>
<dbReference type="Gene3D" id="3.40.50.1100">
    <property type="match status" value="2"/>
</dbReference>
<dbReference type="HAMAP" id="MF_00133">
    <property type="entry name" value="Trp_synth_beta"/>
    <property type="match status" value="1"/>
</dbReference>
<dbReference type="InterPro" id="IPR006653">
    <property type="entry name" value="Trp_synth_b_CS"/>
</dbReference>
<dbReference type="InterPro" id="IPR006654">
    <property type="entry name" value="Trp_synth_beta"/>
</dbReference>
<dbReference type="InterPro" id="IPR023026">
    <property type="entry name" value="Trp_synth_beta/beta-like"/>
</dbReference>
<dbReference type="InterPro" id="IPR001926">
    <property type="entry name" value="TrpB-like_PALP"/>
</dbReference>
<dbReference type="InterPro" id="IPR036052">
    <property type="entry name" value="TrpB-like_PALP_sf"/>
</dbReference>
<dbReference type="NCBIfam" id="TIGR00263">
    <property type="entry name" value="trpB"/>
    <property type="match status" value="1"/>
</dbReference>
<dbReference type="PANTHER" id="PTHR48077:SF3">
    <property type="entry name" value="TRYPTOPHAN SYNTHASE"/>
    <property type="match status" value="1"/>
</dbReference>
<dbReference type="PANTHER" id="PTHR48077">
    <property type="entry name" value="TRYPTOPHAN SYNTHASE-RELATED"/>
    <property type="match status" value="1"/>
</dbReference>
<dbReference type="Pfam" id="PF00291">
    <property type="entry name" value="PALP"/>
    <property type="match status" value="1"/>
</dbReference>
<dbReference type="PIRSF" id="PIRSF001413">
    <property type="entry name" value="Trp_syn_beta"/>
    <property type="match status" value="1"/>
</dbReference>
<dbReference type="SUPFAM" id="SSF53686">
    <property type="entry name" value="Tryptophan synthase beta subunit-like PLP-dependent enzymes"/>
    <property type="match status" value="1"/>
</dbReference>
<dbReference type="PROSITE" id="PS00168">
    <property type="entry name" value="TRP_SYNTHASE_BETA"/>
    <property type="match status" value="1"/>
</dbReference>
<protein>
    <recommendedName>
        <fullName evidence="1">Tryptophan synthase beta chain</fullName>
        <ecNumber evidence="1">4.2.1.20</ecNumber>
    </recommendedName>
</protein>
<gene>
    <name evidence="1" type="primary">trpB</name>
    <name type="ordered locus">FTL_0099</name>
</gene>
<proteinExistence type="inferred from homology"/>